<protein>
    <recommendedName>
        <fullName evidence="1">Methylthioribose-1-phosphate isomerase</fullName>
        <shortName evidence="1">M1Pi</shortName>
        <shortName evidence="1">MTR-1-P isomerase</shortName>
        <ecNumber evidence="1">5.3.1.23</ecNumber>
    </recommendedName>
    <alternativeName>
        <fullName evidence="1">S-methyl-5-thioribose-1-phosphate isomerase</fullName>
    </alternativeName>
</protein>
<dbReference type="EC" id="5.3.1.23" evidence="1"/>
<dbReference type="EMBL" id="CP000859">
    <property type="protein sequence ID" value="ABW67112.1"/>
    <property type="molecule type" value="Genomic_DNA"/>
</dbReference>
<dbReference type="RefSeq" id="WP_012174729.1">
    <property type="nucleotide sequence ID" value="NC_009943.1"/>
</dbReference>
<dbReference type="SMR" id="A8ZYA5"/>
<dbReference type="STRING" id="96561.Dole_1306"/>
<dbReference type="KEGG" id="dol:Dole_1306"/>
<dbReference type="eggNOG" id="COG0182">
    <property type="taxonomic scope" value="Bacteria"/>
</dbReference>
<dbReference type="HOGENOM" id="CLU_016218_1_2_7"/>
<dbReference type="OrthoDB" id="9803436at2"/>
<dbReference type="UniPathway" id="UPA00904">
    <property type="reaction ID" value="UER00874"/>
</dbReference>
<dbReference type="Proteomes" id="UP000008561">
    <property type="component" value="Chromosome"/>
</dbReference>
<dbReference type="GO" id="GO:0046523">
    <property type="term" value="F:S-methyl-5-thioribose-1-phosphate isomerase activity"/>
    <property type="evidence" value="ECO:0007669"/>
    <property type="project" value="UniProtKB-UniRule"/>
</dbReference>
<dbReference type="GO" id="GO:0019509">
    <property type="term" value="P:L-methionine salvage from methylthioadenosine"/>
    <property type="evidence" value="ECO:0007669"/>
    <property type="project" value="UniProtKB-UniRule"/>
</dbReference>
<dbReference type="FunFam" id="3.40.50.10470:FF:000006">
    <property type="entry name" value="Methylthioribose-1-phosphate isomerase"/>
    <property type="match status" value="1"/>
</dbReference>
<dbReference type="Gene3D" id="1.20.120.420">
    <property type="entry name" value="translation initiation factor eif-2b, domain 1"/>
    <property type="match status" value="1"/>
</dbReference>
<dbReference type="Gene3D" id="3.40.50.10470">
    <property type="entry name" value="Translation initiation factor eif-2b, domain 2"/>
    <property type="match status" value="1"/>
</dbReference>
<dbReference type="HAMAP" id="MF_01678">
    <property type="entry name" value="Salvage_MtnA"/>
    <property type="match status" value="1"/>
</dbReference>
<dbReference type="InterPro" id="IPR000649">
    <property type="entry name" value="IF-2B-related"/>
</dbReference>
<dbReference type="InterPro" id="IPR005251">
    <property type="entry name" value="IF-M1Pi"/>
</dbReference>
<dbReference type="InterPro" id="IPR042529">
    <property type="entry name" value="IF_2B-like_C"/>
</dbReference>
<dbReference type="InterPro" id="IPR011559">
    <property type="entry name" value="Initiation_fac_2B_a/b/d"/>
</dbReference>
<dbReference type="InterPro" id="IPR027363">
    <property type="entry name" value="M1Pi_N"/>
</dbReference>
<dbReference type="InterPro" id="IPR037171">
    <property type="entry name" value="NagB/RpiA_transferase-like"/>
</dbReference>
<dbReference type="NCBIfam" id="TIGR00524">
    <property type="entry name" value="eIF-2B_rel"/>
    <property type="match status" value="1"/>
</dbReference>
<dbReference type="NCBIfam" id="NF004326">
    <property type="entry name" value="PRK05720.1"/>
    <property type="match status" value="1"/>
</dbReference>
<dbReference type="NCBIfam" id="TIGR00512">
    <property type="entry name" value="salvage_mtnA"/>
    <property type="match status" value="1"/>
</dbReference>
<dbReference type="PANTHER" id="PTHR43475">
    <property type="entry name" value="METHYLTHIORIBOSE-1-PHOSPHATE ISOMERASE"/>
    <property type="match status" value="1"/>
</dbReference>
<dbReference type="PANTHER" id="PTHR43475:SF1">
    <property type="entry name" value="METHYLTHIORIBOSE-1-PHOSPHATE ISOMERASE"/>
    <property type="match status" value="1"/>
</dbReference>
<dbReference type="Pfam" id="PF01008">
    <property type="entry name" value="IF-2B"/>
    <property type="match status" value="1"/>
</dbReference>
<dbReference type="SUPFAM" id="SSF100950">
    <property type="entry name" value="NagB/RpiA/CoA transferase-like"/>
    <property type="match status" value="1"/>
</dbReference>
<organism>
    <name type="scientific">Desulfosudis oleivorans (strain DSM 6200 / JCM 39069 / Hxd3)</name>
    <name type="common">Desulfococcus oleovorans</name>
    <dbReference type="NCBI Taxonomy" id="96561"/>
    <lineage>
        <taxon>Bacteria</taxon>
        <taxon>Pseudomonadati</taxon>
        <taxon>Thermodesulfobacteriota</taxon>
        <taxon>Desulfobacteria</taxon>
        <taxon>Desulfobacterales</taxon>
        <taxon>Desulfosudaceae</taxon>
        <taxon>Desulfosudis</taxon>
    </lineage>
</organism>
<gene>
    <name evidence="1" type="primary">mtnA</name>
    <name type="ordered locus">Dole_1306</name>
</gene>
<sequence>MTATDPAPTRPIWLADDKKRVQIIDQRMLPHNLVIVDLTTVDQVIEAIGEMMVRGAPLIGVTGAFGVFIAVQNALERGDFEAQVRKECLRIKEARPTAVNLAWGVDRVCAAVFSKTLPADCLAAALAEASAIAEEEVDNCRRIGVHGVGLIETISRQKGGKTVNVLTHCNAGWLACVEHGTATAPIYKAFEKRIDIHVWVDETRPLNQGARLTAWELGQRGVAHTVITDNAGGHLMQHGMVDMVIVGTDRSTYTGDVANKVGTYLKALAARDNNIPFYVALPSSTFDWEMTDGLAQIPIEERNPDEVRCVEGLCPDGRVEKVRIVPENSRAANYAFDVTPARLVTGFITERGVCGAGRDQVLALFPEKR</sequence>
<keyword id="KW-0028">Amino-acid biosynthesis</keyword>
<keyword id="KW-0413">Isomerase</keyword>
<keyword id="KW-0486">Methionine biosynthesis</keyword>
<keyword id="KW-1185">Reference proteome</keyword>
<accession>A8ZYA5</accession>
<proteinExistence type="inferred from homology"/>
<evidence type="ECO:0000255" key="1">
    <source>
        <dbReference type="HAMAP-Rule" id="MF_01678"/>
    </source>
</evidence>
<evidence type="ECO:0000305" key="2"/>
<reference key="1">
    <citation type="submission" date="2007-10" db="EMBL/GenBank/DDBJ databases">
        <title>Complete sequence of Desulfococcus oleovorans Hxd3.</title>
        <authorList>
            <consortium name="US DOE Joint Genome Institute"/>
            <person name="Copeland A."/>
            <person name="Lucas S."/>
            <person name="Lapidus A."/>
            <person name="Barry K."/>
            <person name="Glavina del Rio T."/>
            <person name="Dalin E."/>
            <person name="Tice H."/>
            <person name="Pitluck S."/>
            <person name="Kiss H."/>
            <person name="Brettin T."/>
            <person name="Bruce D."/>
            <person name="Detter J.C."/>
            <person name="Han C."/>
            <person name="Schmutz J."/>
            <person name="Larimer F."/>
            <person name="Land M."/>
            <person name="Hauser L."/>
            <person name="Kyrpides N."/>
            <person name="Kim E."/>
            <person name="Wawrik B."/>
            <person name="Richardson P."/>
        </authorList>
    </citation>
    <scope>NUCLEOTIDE SEQUENCE [LARGE SCALE GENOMIC DNA]</scope>
    <source>
        <strain>DSM 6200 / JCM 39069 / Hxd3</strain>
    </source>
</reference>
<feature type="chain" id="PRO_0000357175" description="Methylthioribose-1-phosphate isomerase">
    <location>
        <begin position="1"/>
        <end position="369"/>
    </location>
</feature>
<feature type="active site" description="Proton donor" evidence="1">
    <location>
        <position position="249"/>
    </location>
</feature>
<feature type="binding site" evidence="1">
    <location>
        <begin position="54"/>
        <end position="56"/>
    </location>
    <ligand>
        <name>substrate</name>
    </ligand>
</feature>
<feature type="binding site" evidence="1">
    <location>
        <position position="95"/>
    </location>
    <ligand>
        <name>substrate</name>
    </ligand>
</feature>
<feature type="binding site" evidence="1">
    <location>
        <position position="208"/>
    </location>
    <ligand>
        <name>substrate</name>
    </ligand>
</feature>
<feature type="binding site" evidence="1">
    <location>
        <begin position="259"/>
        <end position="260"/>
    </location>
    <ligand>
        <name>substrate</name>
    </ligand>
</feature>
<feature type="site" description="Transition state stabilizer" evidence="1">
    <location>
        <position position="169"/>
    </location>
</feature>
<comment type="function">
    <text evidence="1">Catalyzes the interconversion of methylthioribose-1-phosphate (MTR-1-P) into methylthioribulose-1-phosphate (MTRu-1-P).</text>
</comment>
<comment type="catalytic activity">
    <reaction evidence="1">
        <text>5-(methylsulfanyl)-alpha-D-ribose 1-phosphate = 5-(methylsulfanyl)-D-ribulose 1-phosphate</text>
        <dbReference type="Rhea" id="RHEA:19989"/>
        <dbReference type="ChEBI" id="CHEBI:58533"/>
        <dbReference type="ChEBI" id="CHEBI:58548"/>
        <dbReference type="EC" id="5.3.1.23"/>
    </reaction>
</comment>
<comment type="pathway">
    <text evidence="1">Amino-acid biosynthesis; L-methionine biosynthesis via salvage pathway; L-methionine from S-methyl-5-thio-alpha-D-ribose 1-phosphate: step 1/6.</text>
</comment>
<comment type="similarity">
    <text evidence="2">Belongs to the eIF-2B alpha/beta/delta subunits family. MtnA subfamily.</text>
</comment>
<name>MTNA_DESOH</name>